<reference key="1">
    <citation type="journal article" date="1990" name="J. Biol. Chem.">
        <title>The deduced protein sequence of the human carboxypeptidase N high molecular weight subunit reveals the presence of leucine-rich tandem repeats.</title>
        <authorList>
            <person name="Tan F."/>
            <person name="Weerasinghe D.K."/>
            <person name="Skidgel R.A."/>
            <person name="Tamei H."/>
            <person name="Kaul R.K."/>
            <person name="Roninson I.B."/>
            <person name="Schilling J.W."/>
            <person name="Erdoes E.G."/>
        </authorList>
    </citation>
    <scope>NUCLEOTIDE SEQUENCE [MRNA]</scope>
    <scope>VARIANTS ARG-509 AND MET-536</scope>
    <source>
        <tissue>Hepatoblastoma</tissue>
    </source>
</reference>
<reference key="2">
    <citation type="submission" date="2004-08" db="EMBL/GenBank/DDBJ databases">
        <authorList>
            <person name="Skidgel R.A."/>
        </authorList>
    </citation>
    <scope>SEQUENCE REVISION TO N-TERMINUS; 82; 305; 379-426; 436; 445; 446 AND 527-545</scope>
</reference>
<reference key="3">
    <citation type="journal article" date="2006" name="Nature">
        <title>The DNA sequence, annotation and analysis of human chromosome 3.</title>
        <authorList>
            <person name="Muzny D.M."/>
            <person name="Scherer S.E."/>
            <person name="Kaul R."/>
            <person name="Wang J."/>
            <person name="Yu J."/>
            <person name="Sudbrak R."/>
            <person name="Buhay C.J."/>
            <person name="Chen R."/>
            <person name="Cree A."/>
            <person name="Ding Y."/>
            <person name="Dugan-Rocha S."/>
            <person name="Gill R."/>
            <person name="Gunaratne P."/>
            <person name="Harris R.A."/>
            <person name="Hawes A.C."/>
            <person name="Hernandez J."/>
            <person name="Hodgson A.V."/>
            <person name="Hume J."/>
            <person name="Jackson A."/>
            <person name="Khan Z.M."/>
            <person name="Kovar-Smith C."/>
            <person name="Lewis L.R."/>
            <person name="Lozado R.J."/>
            <person name="Metzker M.L."/>
            <person name="Milosavljevic A."/>
            <person name="Miner G.R."/>
            <person name="Morgan M.B."/>
            <person name="Nazareth L.V."/>
            <person name="Scott G."/>
            <person name="Sodergren E."/>
            <person name="Song X.-Z."/>
            <person name="Steffen D."/>
            <person name="Wei S."/>
            <person name="Wheeler D.A."/>
            <person name="Wright M.W."/>
            <person name="Worley K.C."/>
            <person name="Yuan Y."/>
            <person name="Zhang Z."/>
            <person name="Adams C.Q."/>
            <person name="Ansari-Lari M.A."/>
            <person name="Ayele M."/>
            <person name="Brown M.J."/>
            <person name="Chen G."/>
            <person name="Chen Z."/>
            <person name="Clendenning J."/>
            <person name="Clerc-Blankenburg K.P."/>
            <person name="Chen R."/>
            <person name="Chen Z."/>
            <person name="Davis C."/>
            <person name="Delgado O."/>
            <person name="Dinh H.H."/>
            <person name="Dong W."/>
            <person name="Draper H."/>
            <person name="Ernst S."/>
            <person name="Fu G."/>
            <person name="Gonzalez-Garay M.L."/>
            <person name="Garcia D.K."/>
            <person name="Gillett W."/>
            <person name="Gu J."/>
            <person name="Hao B."/>
            <person name="Haugen E."/>
            <person name="Havlak P."/>
            <person name="He X."/>
            <person name="Hennig S."/>
            <person name="Hu S."/>
            <person name="Huang W."/>
            <person name="Jackson L.R."/>
            <person name="Jacob L.S."/>
            <person name="Kelly S.H."/>
            <person name="Kube M."/>
            <person name="Levy R."/>
            <person name="Li Z."/>
            <person name="Liu B."/>
            <person name="Liu J."/>
            <person name="Liu W."/>
            <person name="Lu J."/>
            <person name="Maheshwari M."/>
            <person name="Nguyen B.-V."/>
            <person name="Okwuonu G.O."/>
            <person name="Palmeiri A."/>
            <person name="Pasternak S."/>
            <person name="Perez L.M."/>
            <person name="Phelps K.A."/>
            <person name="Plopper F.J."/>
            <person name="Qiang B."/>
            <person name="Raymond C."/>
            <person name="Rodriguez R."/>
            <person name="Saenphimmachak C."/>
            <person name="Santibanez J."/>
            <person name="Shen H."/>
            <person name="Shen Y."/>
            <person name="Subramanian S."/>
            <person name="Tabor P.E."/>
            <person name="Verduzco D."/>
            <person name="Waldron L."/>
            <person name="Wang J."/>
            <person name="Wang J."/>
            <person name="Wang Q."/>
            <person name="Williams G.A."/>
            <person name="Wong G.K.-S."/>
            <person name="Yao Z."/>
            <person name="Zhang J."/>
            <person name="Zhang X."/>
            <person name="Zhao G."/>
            <person name="Zhou J."/>
            <person name="Zhou Y."/>
            <person name="Nelson D."/>
            <person name="Lehrach H."/>
            <person name="Reinhardt R."/>
            <person name="Naylor S.L."/>
            <person name="Yang H."/>
            <person name="Olson M."/>
            <person name="Weinstock G."/>
            <person name="Gibbs R.A."/>
        </authorList>
    </citation>
    <scope>NUCLEOTIDE SEQUENCE [LARGE SCALE GENOMIC DNA]</scope>
</reference>
<reference key="4">
    <citation type="journal article" date="2004" name="Genome Res.">
        <title>The status, quality, and expansion of the NIH full-length cDNA project: the Mammalian Gene Collection (MGC).</title>
        <authorList>
            <consortium name="The MGC Project Team"/>
        </authorList>
    </citation>
    <scope>NUCLEOTIDE SEQUENCE [LARGE SCALE MRNA]</scope>
</reference>
<reference key="5">
    <citation type="journal article" date="1988" name="Biochem. Biophys. Res. Commun.">
        <title>Amino acid sequence of the N-terminus and selected tryptic peptides of the active subunit of human plasma carboxypeptidase N: comparison with other carboxypeptidases.</title>
        <authorList>
            <person name="Skidgel R.A."/>
            <person name="Bennett C.D."/>
            <person name="Schilling J.W."/>
            <person name="Tan F."/>
            <person name="Weerasinghe D.K."/>
            <person name="Erdoes E.G."/>
        </authorList>
    </citation>
    <scope>PARTIAL PROTEIN SEQUENCE</scope>
</reference>
<reference key="6">
    <citation type="journal article" date="2004" name="Proteomics">
        <title>Screening for N-glycosylated proteins by liquid chromatography mass spectrometry.</title>
        <authorList>
            <person name="Bunkenborg J."/>
            <person name="Pilch B.J."/>
            <person name="Podtelejnikov A.V."/>
            <person name="Wisniewski J.R."/>
        </authorList>
    </citation>
    <scope>GLYCOSYLATION [LARGE SCALE ANALYSIS] AT ASN-348 AND ASN-359</scope>
    <source>
        <tissue>Plasma</tissue>
    </source>
</reference>
<reference key="7">
    <citation type="journal article" date="2005" name="J. Proteome Res.">
        <title>Human plasma N-glycoproteome analysis by immunoaffinity subtraction, hydrazide chemistry, and mass spectrometry.</title>
        <authorList>
            <person name="Liu T."/>
            <person name="Qian W.-J."/>
            <person name="Gritsenko M.A."/>
            <person name="Camp D.G. II"/>
            <person name="Monroe M.E."/>
            <person name="Moore R.J."/>
            <person name="Smith R.D."/>
        </authorList>
    </citation>
    <scope>GLYCOSYLATION [LARGE SCALE ANALYSIS] AT ASN-228 AND ASN-518</scope>
    <source>
        <tissue>Plasma</tissue>
    </source>
</reference>
<dbReference type="EMBL" id="J05158">
    <property type="protein sequence ID" value="AAA51921.2"/>
    <property type="molecule type" value="mRNA"/>
</dbReference>
<dbReference type="EMBL" id="AC125362">
    <property type="status" value="NOT_ANNOTATED_CDS"/>
    <property type="molecule type" value="Genomic_DNA"/>
</dbReference>
<dbReference type="EMBL" id="AC174158">
    <property type="status" value="NOT_ANNOTATED_CDS"/>
    <property type="molecule type" value="Genomic_DNA"/>
</dbReference>
<dbReference type="EMBL" id="BC031569">
    <property type="protein sequence ID" value="AAH31569.2"/>
    <property type="molecule type" value="mRNA"/>
</dbReference>
<dbReference type="EMBL" id="BC042334">
    <property type="protein sequence ID" value="AAH42334.2"/>
    <property type="molecule type" value="mRNA"/>
</dbReference>
<dbReference type="EMBL" id="BC137398">
    <property type="protein sequence ID" value="AAI37399.1"/>
    <property type="molecule type" value="mRNA"/>
</dbReference>
<dbReference type="EMBL" id="BC137403">
    <property type="protein sequence ID" value="AAI37404.1"/>
    <property type="molecule type" value="mRNA"/>
</dbReference>
<dbReference type="CCDS" id="CCDS33920.1"/>
<dbReference type="PIR" id="A34901">
    <property type="entry name" value="A34901"/>
</dbReference>
<dbReference type="RefSeq" id="NP_001073982.3">
    <property type="nucleotide sequence ID" value="NM_001080513.4"/>
</dbReference>
<dbReference type="RefSeq" id="NP_001278917.1">
    <property type="nucleotide sequence ID" value="NM_001291988.2"/>
</dbReference>
<dbReference type="RefSeq" id="XP_005269337.1">
    <property type="nucleotide sequence ID" value="XM_005269280.5"/>
</dbReference>
<dbReference type="SMR" id="P22792"/>
<dbReference type="BioGRID" id="107762">
    <property type="interactions" value="4"/>
</dbReference>
<dbReference type="CORUM" id="P22792"/>
<dbReference type="FunCoup" id="P22792">
    <property type="interactions" value="96"/>
</dbReference>
<dbReference type="IntAct" id="P22792">
    <property type="interactions" value="2"/>
</dbReference>
<dbReference type="STRING" id="9606.ENSP00000319464"/>
<dbReference type="DrugBank" id="DB12271">
    <property type="generic name" value="ORE-1001"/>
</dbReference>
<dbReference type="DrugBank" id="DB01593">
    <property type="generic name" value="Zinc"/>
</dbReference>
<dbReference type="DrugBank" id="DB14487">
    <property type="generic name" value="Zinc acetate"/>
</dbReference>
<dbReference type="DrugBank" id="DB14533">
    <property type="generic name" value="Zinc chloride"/>
</dbReference>
<dbReference type="DrugBank" id="DB14548">
    <property type="generic name" value="Zinc sulfate, unspecified form"/>
</dbReference>
<dbReference type="MEROPS" id="M14.004"/>
<dbReference type="MEROPS" id="X28.001"/>
<dbReference type="GlyConnect" id="1068">
    <property type="glycosylation" value="7 N-Linked glycans (3 sites)"/>
</dbReference>
<dbReference type="GlyCosmos" id="P22792">
    <property type="glycosylation" value="8 sites, 10 glycans"/>
</dbReference>
<dbReference type="GlyGen" id="P22792">
    <property type="glycosylation" value="8 sites, 35 N-linked glycans (4 sites)"/>
</dbReference>
<dbReference type="iPTMnet" id="P22792"/>
<dbReference type="PhosphoSitePlus" id="P22792"/>
<dbReference type="BioMuta" id="CPN2"/>
<dbReference type="DMDM" id="334302917"/>
<dbReference type="MassIVE" id="P22792"/>
<dbReference type="PaxDb" id="9606-ENSP00000319464"/>
<dbReference type="PeptideAtlas" id="P22792"/>
<dbReference type="ProteomicsDB" id="54038"/>
<dbReference type="Antibodypedia" id="856">
    <property type="antibodies" value="189 antibodies from 29 providers"/>
</dbReference>
<dbReference type="DNASU" id="1370"/>
<dbReference type="Ensembl" id="ENST00000323830.4">
    <property type="protein sequence ID" value="ENSP00000319464.3"/>
    <property type="gene ID" value="ENSG00000178772.7"/>
</dbReference>
<dbReference type="Ensembl" id="ENST00000429275.1">
    <property type="protein sequence ID" value="ENSP00000402232.1"/>
    <property type="gene ID" value="ENSG00000178772.7"/>
</dbReference>
<dbReference type="GeneID" id="1370"/>
<dbReference type="KEGG" id="hsa:1370"/>
<dbReference type="MANE-Select" id="ENST00000323830.4">
    <property type="protein sequence ID" value="ENSP00000319464.3"/>
    <property type="RefSeq nucleotide sequence ID" value="NM_001080513.4"/>
    <property type="RefSeq protein sequence ID" value="NP_001073982.3"/>
</dbReference>
<dbReference type="UCSC" id="uc003fts.3">
    <property type="organism name" value="human"/>
</dbReference>
<dbReference type="AGR" id="HGNC:2313"/>
<dbReference type="CTD" id="1370"/>
<dbReference type="DisGeNET" id="1370"/>
<dbReference type="GeneCards" id="CPN2"/>
<dbReference type="HGNC" id="HGNC:2313">
    <property type="gene designation" value="CPN2"/>
</dbReference>
<dbReference type="HPA" id="ENSG00000178772">
    <property type="expression patterns" value="Tissue enriched (liver)"/>
</dbReference>
<dbReference type="MIM" id="603104">
    <property type="type" value="gene"/>
</dbReference>
<dbReference type="neXtProt" id="NX_P22792"/>
<dbReference type="OpenTargets" id="ENSG00000178772"/>
<dbReference type="PharmGKB" id="PA26830"/>
<dbReference type="VEuPathDB" id="HostDB:ENSG00000178772"/>
<dbReference type="eggNOG" id="KOG0619">
    <property type="taxonomic scope" value="Eukaryota"/>
</dbReference>
<dbReference type="GeneTree" id="ENSGT00940000163072"/>
<dbReference type="HOGENOM" id="CLU_000288_18_6_1"/>
<dbReference type="InParanoid" id="P22792"/>
<dbReference type="OMA" id="REVFCSD"/>
<dbReference type="OrthoDB" id="6363818at2759"/>
<dbReference type="PAN-GO" id="P22792">
    <property type="GO annotations" value="2 GO annotations based on evolutionary models"/>
</dbReference>
<dbReference type="PhylomeDB" id="P22792"/>
<dbReference type="TreeFam" id="TF351124"/>
<dbReference type="PathwayCommons" id="P22792"/>
<dbReference type="Reactome" id="R-HSA-977606">
    <property type="pathway name" value="Regulation of Complement cascade"/>
</dbReference>
<dbReference type="SignaLink" id="P22792"/>
<dbReference type="BioGRID-ORCS" id="1370">
    <property type="hits" value="11 hits in 1148 CRISPR screens"/>
</dbReference>
<dbReference type="GeneWiki" id="CPN2"/>
<dbReference type="GenomeRNAi" id="1370"/>
<dbReference type="Pharos" id="P22792">
    <property type="development level" value="Tdark"/>
</dbReference>
<dbReference type="PRO" id="PR:P22792"/>
<dbReference type="Proteomes" id="UP000005640">
    <property type="component" value="Chromosome 3"/>
</dbReference>
<dbReference type="RNAct" id="P22792">
    <property type="molecule type" value="protein"/>
</dbReference>
<dbReference type="Bgee" id="ENSG00000178772">
    <property type="expression patterns" value="Expressed in right lobe of liver and 45 other cell types or tissues"/>
</dbReference>
<dbReference type="GO" id="GO:0072562">
    <property type="term" value="C:blood microparticle"/>
    <property type="evidence" value="ECO:0007005"/>
    <property type="project" value="UniProtKB"/>
</dbReference>
<dbReference type="GO" id="GO:0070062">
    <property type="term" value="C:extracellular exosome"/>
    <property type="evidence" value="ECO:0007005"/>
    <property type="project" value="UniProtKB"/>
</dbReference>
<dbReference type="GO" id="GO:0031012">
    <property type="term" value="C:extracellular matrix"/>
    <property type="evidence" value="ECO:0000318"/>
    <property type="project" value="GO_Central"/>
</dbReference>
<dbReference type="GO" id="GO:0005576">
    <property type="term" value="C:extracellular region"/>
    <property type="evidence" value="ECO:0000304"/>
    <property type="project" value="Reactome"/>
</dbReference>
<dbReference type="GO" id="GO:0005615">
    <property type="term" value="C:extracellular space"/>
    <property type="evidence" value="ECO:0000318"/>
    <property type="project" value="GO_Central"/>
</dbReference>
<dbReference type="GO" id="GO:0030234">
    <property type="term" value="F:enzyme regulator activity"/>
    <property type="evidence" value="ECO:0000303"/>
    <property type="project" value="UniProtKB"/>
</dbReference>
<dbReference type="GO" id="GO:0050821">
    <property type="term" value="P:protein stabilization"/>
    <property type="evidence" value="ECO:0000303"/>
    <property type="project" value="UniProtKB"/>
</dbReference>
<dbReference type="FunFam" id="3.80.10.10:FF:000549">
    <property type="entry name" value="Carboxypeptidase N subunit 2"/>
    <property type="match status" value="1"/>
</dbReference>
<dbReference type="FunFam" id="3.80.10.10:FF:000720">
    <property type="entry name" value="Carboxypeptidase N subunit 2"/>
    <property type="match status" value="1"/>
</dbReference>
<dbReference type="Gene3D" id="3.80.10.10">
    <property type="entry name" value="Ribonuclease Inhibitor"/>
    <property type="match status" value="3"/>
</dbReference>
<dbReference type="InterPro" id="IPR000483">
    <property type="entry name" value="Cys-rich_flank_reg_C"/>
</dbReference>
<dbReference type="InterPro" id="IPR001611">
    <property type="entry name" value="Leu-rich_rpt"/>
</dbReference>
<dbReference type="InterPro" id="IPR003591">
    <property type="entry name" value="Leu-rich_rpt_typical-subtyp"/>
</dbReference>
<dbReference type="InterPro" id="IPR032675">
    <property type="entry name" value="LRR_dom_sf"/>
</dbReference>
<dbReference type="InterPro" id="IPR000372">
    <property type="entry name" value="LRRNT"/>
</dbReference>
<dbReference type="PANTHER" id="PTHR24366">
    <property type="entry name" value="IG(IMMUNOGLOBULIN) AND LRR(LEUCINE RICH REPEAT) DOMAINS"/>
    <property type="match status" value="1"/>
</dbReference>
<dbReference type="PANTHER" id="PTHR24366:SF161">
    <property type="entry name" value="TIR DOMAIN-CONTAINING PROTEIN"/>
    <property type="match status" value="1"/>
</dbReference>
<dbReference type="Pfam" id="PF13855">
    <property type="entry name" value="LRR_8"/>
    <property type="match status" value="3"/>
</dbReference>
<dbReference type="SMART" id="SM00364">
    <property type="entry name" value="LRR_BAC"/>
    <property type="match status" value="8"/>
</dbReference>
<dbReference type="SMART" id="SM00369">
    <property type="entry name" value="LRR_TYP"/>
    <property type="match status" value="12"/>
</dbReference>
<dbReference type="SMART" id="SM00082">
    <property type="entry name" value="LRRCT"/>
    <property type="match status" value="1"/>
</dbReference>
<dbReference type="SMART" id="SM00013">
    <property type="entry name" value="LRRNT"/>
    <property type="match status" value="1"/>
</dbReference>
<dbReference type="SUPFAM" id="SSF52058">
    <property type="entry name" value="L domain-like"/>
    <property type="match status" value="1"/>
</dbReference>
<dbReference type="PROSITE" id="PS51450">
    <property type="entry name" value="LRR"/>
    <property type="match status" value="11"/>
</dbReference>
<keyword id="KW-0903">Direct protein sequencing</keyword>
<keyword id="KW-1015">Disulfide bond</keyword>
<keyword id="KW-0325">Glycoprotein</keyword>
<keyword id="KW-0433">Leucine-rich repeat</keyword>
<keyword id="KW-1267">Proteomics identification</keyword>
<keyword id="KW-1185">Reference proteome</keyword>
<keyword id="KW-0677">Repeat</keyword>
<keyword id="KW-0964">Secreted</keyword>
<keyword id="KW-0732">Signal</keyword>
<name>CPN2_HUMAN</name>
<accession>P22792</accession>
<accession>B2RPE7</accession>
<accession>Q86SU4</accession>
<accession>Q8N5V4</accession>
<feature type="signal peptide" evidence="1">
    <location>
        <begin position="1"/>
        <end position="21"/>
    </location>
</feature>
<feature type="chain" id="PRO_0000020989" description="Carboxypeptidase N subunit 2">
    <location>
        <begin position="22"/>
        <end position="545"/>
    </location>
</feature>
<feature type="domain" description="LRRNT">
    <location>
        <begin position="22"/>
        <end position="49"/>
    </location>
</feature>
<feature type="repeat" description="LRR 1">
    <location>
        <begin position="98"/>
        <end position="119"/>
    </location>
</feature>
<feature type="repeat" description="LRR 2">
    <location>
        <begin position="122"/>
        <end position="143"/>
    </location>
</feature>
<feature type="repeat" description="LRR 3">
    <location>
        <begin position="146"/>
        <end position="167"/>
    </location>
</feature>
<feature type="repeat" description="LRR 4">
    <location>
        <begin position="170"/>
        <end position="191"/>
    </location>
</feature>
<feature type="repeat" description="LRR 5">
    <location>
        <begin position="194"/>
        <end position="215"/>
    </location>
</feature>
<feature type="repeat" description="LRR 6">
    <location>
        <begin position="218"/>
        <end position="239"/>
    </location>
</feature>
<feature type="repeat" description="LRR 7">
    <location>
        <begin position="242"/>
        <end position="263"/>
    </location>
</feature>
<feature type="repeat" description="LRR 8">
    <location>
        <begin position="266"/>
        <end position="287"/>
    </location>
</feature>
<feature type="repeat" description="LRR 9">
    <location>
        <begin position="290"/>
        <end position="311"/>
    </location>
</feature>
<feature type="repeat" description="LRR 10">
    <location>
        <begin position="314"/>
        <end position="335"/>
    </location>
</feature>
<feature type="repeat" description="LRR 11">
    <location>
        <begin position="338"/>
        <end position="359"/>
    </location>
</feature>
<feature type="repeat" description="LRR 12">
    <location>
        <begin position="362"/>
        <end position="383"/>
    </location>
</feature>
<feature type="domain" description="LRRCT">
    <location>
        <begin position="395"/>
        <end position="447"/>
    </location>
</feature>
<feature type="glycosylation site" description="N-linked (GlcNAc...) asparagine" evidence="1">
    <location>
        <position position="74"/>
    </location>
</feature>
<feature type="glycosylation site" description="N-linked (GlcNAc...) asparagine" evidence="1">
    <location>
        <position position="111"/>
    </location>
</feature>
<feature type="glycosylation site" description="N-linked (GlcNAc...) asparagine" evidence="1">
    <location>
        <position position="119"/>
    </location>
</feature>
<feature type="glycosylation site" description="N-linked (GlcNAc...) asparagine" evidence="3">
    <location>
        <position position="228"/>
    </location>
</feature>
<feature type="glycosylation site" description="N-linked (GlcNAc...) asparagine" evidence="1">
    <location>
        <position position="266"/>
    </location>
</feature>
<feature type="glycosylation site" description="N-linked (GlcNAc...) asparagine" evidence="2">
    <location>
        <position position="348"/>
    </location>
</feature>
<feature type="glycosylation site" description="N-linked (GlcNAc...) asparagine" evidence="2">
    <location>
        <position position="359"/>
    </location>
</feature>
<feature type="glycosylation site" description="N-linked (GlcNAc...) asparagine" evidence="3">
    <location>
        <position position="518"/>
    </location>
</feature>
<feature type="sequence variant" id="VAR_019722" description="In dbSNP:rs3732477.">
    <original>A</original>
    <variation>T</variation>
    <location>
        <position position="305"/>
    </location>
</feature>
<feature type="sequence variant" id="VAR_065186" description="In dbSNP:rs4974538." evidence="4">
    <original>Q</original>
    <variation>R</variation>
    <location>
        <position position="509"/>
    </location>
</feature>
<feature type="sequence variant" id="VAR_019721" description="In dbSNP:rs11711157." evidence="4">
    <original>V</original>
    <variation>M</variation>
    <location>
        <position position="536"/>
    </location>
</feature>
<feature type="sequence conflict" description="In Ref. 4; AAH42334." evidence="5" ref="4">
    <original>Q</original>
    <variation>R</variation>
    <location>
        <position position="156"/>
    </location>
</feature>
<feature type="sequence conflict" description="In Ref. 4; AAH31569/AAH42334/AAI37399/AAI37404." evidence="5" ref="4">
    <original>Q</original>
    <variation>W</variation>
    <location>
        <position position="509"/>
    </location>
</feature>
<comment type="function">
    <text>The 83 kDa subunit binds and stabilizes the catalytic subunit at 37 degrees Celsius and keeps it in circulation. Under some circumstances it may be an allosteric modifier of the catalytic subunit.</text>
</comment>
<comment type="subunit">
    <text>Tetramer of two catalytic chains and two glycosylated inactive chains.</text>
</comment>
<comment type="subcellular location">
    <subcellularLocation>
        <location>Secreted</location>
    </subcellularLocation>
</comment>
<comment type="PTM">
    <text>Whether or not any Cys residues participate in intrachain bonds is unknown, but they do not form interchain disulfide bonds with the 50 kDa catalytic subunit.</text>
</comment>
<organism>
    <name type="scientific">Homo sapiens</name>
    <name type="common">Human</name>
    <dbReference type="NCBI Taxonomy" id="9606"/>
    <lineage>
        <taxon>Eukaryota</taxon>
        <taxon>Metazoa</taxon>
        <taxon>Chordata</taxon>
        <taxon>Craniata</taxon>
        <taxon>Vertebrata</taxon>
        <taxon>Euteleostomi</taxon>
        <taxon>Mammalia</taxon>
        <taxon>Eutheria</taxon>
        <taxon>Euarchontoglires</taxon>
        <taxon>Primates</taxon>
        <taxon>Haplorrhini</taxon>
        <taxon>Catarrhini</taxon>
        <taxon>Hominidae</taxon>
        <taxon>Homo</taxon>
    </lineage>
</organism>
<sequence length="545" mass="60557">MLPGAWLLWTSLLLLARPAQPCPMGCDCFVQEVFCSDEELATVPLDIPPYTKNIIFVETSFTTLETRAFGSNPNLTKVVFLNTQLCQFRPDAFGGLPRLEDLEVTGSSFLNLSTNIFSNLTSLGKLTLNFNMLEALPEGLFQHLAALESLHLQGNQLQALPRRLFQPLTHLKTLNLAQNLLAQLPEELFHPLTSLQTLKLSNNALSGLPQGVFGKLGSLQELFLDSNNISELPPQVFSQLFCLERLWLQRNAITHLPLSIFASLGNLTFLSLQWNMLRVLPAGLFAHTPCLVGLSLTHNQLETVAEGTFAHLSNLRSLMLSYNAITHLPAGIFRDLEELVKLYLGSNNLTALHPALFQNLSKLELLSLSKNQLTTLPEGIFDTNYNLFNLALHGNPWQCDCHLAYLFNWLQQYTDRLLNIQTYCAGPAYLKGQVVPALNEKQLVCPVTRDHLGFQVTWPDESKAGGSWDLAVQERAARSQCTYSNPEGTVVLACDQAQCRWLNVQLSPQQGSLGLQYNASQEWDLRSSCGSLRLTVSIEARAAGP</sequence>
<gene>
    <name type="primary">CPN2</name>
    <name type="synonym">ACBP</name>
</gene>
<protein>
    <recommendedName>
        <fullName>Carboxypeptidase N subunit 2</fullName>
    </recommendedName>
    <alternativeName>
        <fullName>Carboxypeptidase N 83 kDa chain</fullName>
    </alternativeName>
    <alternativeName>
        <fullName>Carboxypeptidase N large subunit</fullName>
    </alternativeName>
    <alternativeName>
        <fullName>Carboxypeptidase N polypeptide 2</fullName>
    </alternativeName>
    <alternativeName>
        <fullName>Carboxypeptidase N regulatory subunit</fullName>
    </alternativeName>
</protein>
<evidence type="ECO:0000255" key="1"/>
<evidence type="ECO:0000269" key="2">
    <source>
    </source>
</evidence>
<evidence type="ECO:0000269" key="3">
    <source>
    </source>
</evidence>
<evidence type="ECO:0000269" key="4">
    <source>
    </source>
</evidence>
<evidence type="ECO:0000305" key="5"/>
<proteinExistence type="evidence at protein level"/>